<keyword id="KW-0046">Antibiotic resistance</keyword>
<keyword id="KW-0050">Antiport</keyword>
<keyword id="KW-0997">Cell inner membrane</keyword>
<keyword id="KW-1003">Cell membrane</keyword>
<keyword id="KW-0472">Membrane</keyword>
<keyword id="KW-1185">Reference proteome</keyword>
<keyword id="KW-0812">Transmembrane</keyword>
<keyword id="KW-1133">Transmembrane helix</keyword>
<keyword id="KW-0813">Transport</keyword>
<reference key="1">
    <citation type="journal article" date="2001" name="Nature">
        <title>Complete genome sequence of Salmonella enterica serovar Typhimurium LT2.</title>
        <authorList>
            <person name="McClelland M."/>
            <person name="Sanderson K.E."/>
            <person name="Spieth J."/>
            <person name="Clifton S.W."/>
            <person name="Latreille P."/>
            <person name="Courtney L."/>
            <person name="Porwollik S."/>
            <person name="Ali J."/>
            <person name="Dante M."/>
            <person name="Du F."/>
            <person name="Hou S."/>
            <person name="Layman D."/>
            <person name="Leonard S."/>
            <person name="Nguyen C."/>
            <person name="Scott K."/>
            <person name="Holmes A."/>
            <person name="Grewal N."/>
            <person name="Mulvaney E."/>
            <person name="Ryan E."/>
            <person name="Sun H."/>
            <person name="Florea L."/>
            <person name="Miller W."/>
            <person name="Stoneking T."/>
            <person name="Nhan M."/>
            <person name="Waterston R."/>
            <person name="Wilson R.K."/>
        </authorList>
    </citation>
    <scope>NUCLEOTIDE SEQUENCE [LARGE SCALE GENOMIC DNA]</scope>
    <source>
        <strain>LT2 / SGSC1412 / ATCC 700720</strain>
    </source>
</reference>
<organism>
    <name type="scientific">Salmonella typhimurium (strain LT2 / SGSC1412 / ATCC 700720)</name>
    <dbReference type="NCBI Taxonomy" id="99287"/>
    <lineage>
        <taxon>Bacteria</taxon>
        <taxon>Pseudomonadati</taxon>
        <taxon>Pseudomonadota</taxon>
        <taxon>Gammaproteobacteria</taxon>
        <taxon>Enterobacterales</taxon>
        <taxon>Enterobacteriaceae</taxon>
        <taxon>Salmonella</taxon>
    </lineage>
</organism>
<name>MDTM_SALTY</name>
<sequence length="413" mass="44792">MQRIIQFFSQRATTLFFPMALILYDFAAYLTTDLIQPGIINVVRDFNADVSLAPASVSLYLAGGMALQWLLGPLSDRIGRRPVLIAGALIFTLACAATLLTTSMTQFLVARFVQGTSICFIATVGYVTVQEAFGQTKAIKLMAIITSIVLVAPVIGPLSGAALMHFVHWKVLFGIIAVMGLLALCGLLLAMPETVQRGAVPFSAVSVLRDFRNVFRNPIFLTGAATLSLSYIPMMSWVAVSPVILIDAGGMSTSQFAWAQVPVFGAVIVANMIVVRLVKDPTRPRFIWRAVPIQLSGLATLLLGNLLLPHVWLWSVLGTSLYAFGIGMIFPTLFRFTLFSNNLPKGTVSASLNMVILTVMAVSVEVGRWLWFHGGRLPFHLLAAVAGVIVVFTLATLLQRVRQHEAAELAAEK</sequence>
<evidence type="ECO:0000250" key="1">
    <source>
        <dbReference type="UniProtKB" id="P39386"/>
    </source>
</evidence>
<evidence type="ECO:0000255" key="2"/>
<evidence type="ECO:0000305" key="3"/>
<feature type="chain" id="PRO_0000084842" description="Multidrug resistance protein MdtM">
    <location>
        <begin position="1"/>
        <end position="413"/>
    </location>
</feature>
<feature type="topological domain" description="Cytoplasmic" evidence="3">
    <location>
        <begin position="1"/>
        <end position="14"/>
    </location>
</feature>
<feature type="transmembrane region" description="Helical" evidence="2">
    <location>
        <begin position="15"/>
        <end position="35"/>
    </location>
</feature>
<feature type="topological domain" description="Periplasmic" evidence="3">
    <location>
        <begin position="36"/>
        <end position="51"/>
    </location>
</feature>
<feature type="transmembrane region" description="Helical" evidence="2">
    <location>
        <begin position="52"/>
        <end position="72"/>
    </location>
</feature>
<feature type="topological domain" description="Cytoplasmic" evidence="3">
    <location>
        <begin position="73"/>
        <end position="81"/>
    </location>
</feature>
<feature type="transmembrane region" description="Helical" evidence="2">
    <location>
        <begin position="82"/>
        <end position="102"/>
    </location>
</feature>
<feature type="topological domain" description="Periplasmic" evidence="3">
    <location>
        <begin position="103"/>
        <end position="106"/>
    </location>
</feature>
<feature type="transmembrane region" description="Helical" evidence="2">
    <location>
        <begin position="107"/>
        <end position="127"/>
    </location>
</feature>
<feature type="topological domain" description="Cytoplasmic" evidence="3">
    <location>
        <begin position="128"/>
        <end position="140"/>
    </location>
</feature>
<feature type="transmembrane region" description="Helical" evidence="2">
    <location>
        <begin position="141"/>
        <end position="161"/>
    </location>
</feature>
<feature type="topological domain" description="Periplasmic" evidence="3">
    <location>
        <begin position="162"/>
        <end position="170"/>
    </location>
</feature>
<feature type="transmembrane region" description="Helical" evidence="2">
    <location>
        <begin position="171"/>
        <end position="191"/>
    </location>
</feature>
<feature type="topological domain" description="Cytoplasmic" evidence="3">
    <location>
        <begin position="192"/>
        <end position="225"/>
    </location>
</feature>
<feature type="transmembrane region" description="Helical" evidence="2">
    <location>
        <begin position="226"/>
        <end position="246"/>
    </location>
</feature>
<feature type="topological domain" description="Periplasmic" evidence="3">
    <location>
        <begin position="247"/>
        <end position="254"/>
    </location>
</feature>
<feature type="transmembrane region" description="Helical" evidence="2">
    <location>
        <begin position="255"/>
        <end position="275"/>
    </location>
</feature>
<feature type="topological domain" description="Cytoplasmic" evidence="3">
    <location>
        <begin position="276"/>
        <end position="289"/>
    </location>
</feature>
<feature type="transmembrane region" description="Helical" evidence="2">
    <location>
        <begin position="290"/>
        <end position="310"/>
    </location>
</feature>
<feature type="transmembrane region" description="Helical" evidence="2">
    <location>
        <begin position="311"/>
        <end position="331"/>
    </location>
</feature>
<feature type="topological domain" description="Cytoplasmic" evidence="3">
    <location>
        <begin position="332"/>
        <end position="351"/>
    </location>
</feature>
<feature type="transmembrane region" description="Helical" evidence="2">
    <location>
        <begin position="352"/>
        <end position="372"/>
    </location>
</feature>
<feature type="topological domain" description="Periplasmic" evidence="3">
    <location>
        <begin position="373"/>
        <end position="376"/>
    </location>
</feature>
<feature type="transmembrane region" description="Helical" evidence="2">
    <location>
        <begin position="377"/>
        <end position="397"/>
    </location>
</feature>
<feature type="topological domain" description="Cytoplasmic" evidence="1">
    <location>
        <begin position="398"/>
        <end position="413"/>
    </location>
</feature>
<comment type="function">
    <text evidence="1">Proton-dependent efflux pump (By similarity). Confers resistance to a broad spectrum of chemically unrelated substrates (By similarity).</text>
</comment>
<comment type="subcellular location">
    <subcellularLocation>
        <location evidence="1">Cell inner membrane</location>
        <topology evidence="2">Multi-pass membrane protein</topology>
    </subcellularLocation>
</comment>
<comment type="similarity">
    <text evidence="3">Belongs to the major facilitator superfamily.</text>
</comment>
<accession>Q7CP73</accession>
<dbReference type="EMBL" id="AE006468">
    <property type="protein sequence ID" value="AAL23335.1"/>
    <property type="molecule type" value="Genomic_DNA"/>
</dbReference>
<dbReference type="RefSeq" id="WP_001188918.1">
    <property type="nucleotide sequence ID" value="NC_003197.2"/>
</dbReference>
<dbReference type="SMR" id="Q7CP73"/>
<dbReference type="STRING" id="99287.STM4517"/>
<dbReference type="PaxDb" id="99287-STM4517"/>
<dbReference type="KEGG" id="stm:STM4517"/>
<dbReference type="PATRIC" id="fig|99287.12.peg.4758"/>
<dbReference type="HOGENOM" id="CLU_001265_47_2_6"/>
<dbReference type="OMA" id="YIPLMSW"/>
<dbReference type="PhylomeDB" id="Q7CP73"/>
<dbReference type="BioCyc" id="SENT99287:STM4517-MONOMER"/>
<dbReference type="Proteomes" id="UP000001014">
    <property type="component" value="Chromosome"/>
</dbReference>
<dbReference type="GO" id="GO:0005886">
    <property type="term" value="C:plasma membrane"/>
    <property type="evidence" value="ECO:0000318"/>
    <property type="project" value="GO_Central"/>
</dbReference>
<dbReference type="GO" id="GO:0015385">
    <property type="term" value="F:sodium:proton antiporter activity"/>
    <property type="evidence" value="ECO:0000318"/>
    <property type="project" value="GO_Central"/>
</dbReference>
<dbReference type="GO" id="GO:0046677">
    <property type="term" value="P:response to antibiotic"/>
    <property type="evidence" value="ECO:0007669"/>
    <property type="project" value="UniProtKB-KW"/>
</dbReference>
<dbReference type="GO" id="GO:1990961">
    <property type="term" value="P:xenobiotic detoxification by transmembrane export across the plasma membrane"/>
    <property type="evidence" value="ECO:0000318"/>
    <property type="project" value="GO_Central"/>
</dbReference>
<dbReference type="CDD" id="cd17320">
    <property type="entry name" value="MFS_MdfA_MDR_like"/>
    <property type="match status" value="1"/>
</dbReference>
<dbReference type="FunFam" id="1.20.1720.10:FF:000010">
    <property type="entry name" value="Multidrug resistance protein MdtM"/>
    <property type="match status" value="1"/>
</dbReference>
<dbReference type="Gene3D" id="1.20.1720.10">
    <property type="entry name" value="Multidrug resistance protein D"/>
    <property type="match status" value="1"/>
</dbReference>
<dbReference type="InterPro" id="IPR011701">
    <property type="entry name" value="MFS"/>
</dbReference>
<dbReference type="InterPro" id="IPR020846">
    <property type="entry name" value="MFS_dom"/>
</dbReference>
<dbReference type="InterPro" id="IPR036259">
    <property type="entry name" value="MFS_trans_sf"/>
</dbReference>
<dbReference type="InterPro" id="IPR005829">
    <property type="entry name" value="Sugar_transporter_CS"/>
</dbReference>
<dbReference type="NCBIfam" id="NF011932">
    <property type="entry name" value="PRK15403.1"/>
    <property type="match status" value="1"/>
</dbReference>
<dbReference type="PANTHER" id="PTHR23502">
    <property type="entry name" value="MAJOR FACILITATOR SUPERFAMILY"/>
    <property type="match status" value="1"/>
</dbReference>
<dbReference type="PANTHER" id="PTHR23502:SF10">
    <property type="entry name" value="MULTIDRUG RESISTANCE PROTEIN MDTM"/>
    <property type="match status" value="1"/>
</dbReference>
<dbReference type="Pfam" id="PF07690">
    <property type="entry name" value="MFS_1"/>
    <property type="match status" value="1"/>
</dbReference>
<dbReference type="SUPFAM" id="SSF103473">
    <property type="entry name" value="MFS general substrate transporter"/>
    <property type="match status" value="1"/>
</dbReference>
<dbReference type="PROSITE" id="PS50850">
    <property type="entry name" value="MFS"/>
    <property type="match status" value="1"/>
</dbReference>
<proteinExistence type="inferred from homology"/>
<protein>
    <recommendedName>
        <fullName evidence="1">Multidrug resistance protein MdtM</fullName>
    </recommendedName>
</protein>
<gene>
    <name type="primary">mdtM</name>
    <name type="ordered locus">STM4517</name>
</gene>